<gene>
    <name evidence="1" type="primary">hisB</name>
    <name type="ordered locus">BL1297</name>
</gene>
<organism>
    <name type="scientific">Bifidobacterium longum (strain NCC 2705)</name>
    <dbReference type="NCBI Taxonomy" id="206672"/>
    <lineage>
        <taxon>Bacteria</taxon>
        <taxon>Bacillati</taxon>
        <taxon>Actinomycetota</taxon>
        <taxon>Actinomycetes</taxon>
        <taxon>Bifidobacteriales</taxon>
        <taxon>Bifidobacteriaceae</taxon>
        <taxon>Bifidobacterium</taxon>
    </lineage>
</organism>
<dbReference type="EC" id="4.2.1.19" evidence="1"/>
<dbReference type="EMBL" id="AE014295">
    <property type="protein sequence ID" value="AAN25098.1"/>
    <property type="molecule type" value="Genomic_DNA"/>
</dbReference>
<dbReference type="RefSeq" id="NP_696462.1">
    <property type="nucleotide sequence ID" value="NC_004307.2"/>
</dbReference>
<dbReference type="RefSeq" id="WP_007052519.1">
    <property type="nucleotide sequence ID" value="NC_004307.2"/>
</dbReference>
<dbReference type="SMR" id="Q8G4S7"/>
<dbReference type="STRING" id="206672.BL1297"/>
<dbReference type="EnsemblBacteria" id="AAN25098">
    <property type="protein sequence ID" value="AAN25098"/>
    <property type="gene ID" value="BL1297"/>
</dbReference>
<dbReference type="GeneID" id="69578520"/>
<dbReference type="KEGG" id="blo:BL1297"/>
<dbReference type="PATRIC" id="fig|206672.9.peg.146"/>
<dbReference type="HOGENOM" id="CLU_044308_2_0_11"/>
<dbReference type="OrthoDB" id="9790411at2"/>
<dbReference type="PhylomeDB" id="Q8G4S7"/>
<dbReference type="UniPathway" id="UPA00031">
    <property type="reaction ID" value="UER00011"/>
</dbReference>
<dbReference type="Proteomes" id="UP000000439">
    <property type="component" value="Chromosome"/>
</dbReference>
<dbReference type="GO" id="GO:0005737">
    <property type="term" value="C:cytoplasm"/>
    <property type="evidence" value="ECO:0007669"/>
    <property type="project" value="UniProtKB-SubCell"/>
</dbReference>
<dbReference type="GO" id="GO:0004424">
    <property type="term" value="F:imidazoleglycerol-phosphate dehydratase activity"/>
    <property type="evidence" value="ECO:0007669"/>
    <property type="project" value="UniProtKB-UniRule"/>
</dbReference>
<dbReference type="GO" id="GO:0000105">
    <property type="term" value="P:L-histidine biosynthetic process"/>
    <property type="evidence" value="ECO:0007669"/>
    <property type="project" value="UniProtKB-UniRule"/>
</dbReference>
<dbReference type="CDD" id="cd07914">
    <property type="entry name" value="IGPD"/>
    <property type="match status" value="1"/>
</dbReference>
<dbReference type="FunFam" id="3.30.230.40:FF:000001">
    <property type="entry name" value="Imidazoleglycerol-phosphate dehydratase HisB"/>
    <property type="match status" value="1"/>
</dbReference>
<dbReference type="FunFam" id="3.30.230.40:FF:000003">
    <property type="entry name" value="Imidazoleglycerol-phosphate dehydratase HisB"/>
    <property type="match status" value="1"/>
</dbReference>
<dbReference type="Gene3D" id="3.30.230.40">
    <property type="entry name" value="Imidazole glycerol phosphate dehydratase, domain 1"/>
    <property type="match status" value="2"/>
</dbReference>
<dbReference type="HAMAP" id="MF_00076">
    <property type="entry name" value="HisB"/>
    <property type="match status" value="1"/>
</dbReference>
<dbReference type="InterPro" id="IPR038494">
    <property type="entry name" value="IGPD_sf"/>
</dbReference>
<dbReference type="InterPro" id="IPR000807">
    <property type="entry name" value="ImidazoleglycerolP_deHydtase"/>
</dbReference>
<dbReference type="InterPro" id="IPR020565">
    <property type="entry name" value="ImidazoleglycerP_deHydtase_CS"/>
</dbReference>
<dbReference type="InterPro" id="IPR020568">
    <property type="entry name" value="Ribosomal_Su5_D2-typ_SF"/>
</dbReference>
<dbReference type="NCBIfam" id="NF002110">
    <property type="entry name" value="PRK00951.1-6"/>
    <property type="match status" value="1"/>
</dbReference>
<dbReference type="NCBIfam" id="NF002111">
    <property type="entry name" value="PRK00951.2-1"/>
    <property type="match status" value="1"/>
</dbReference>
<dbReference type="NCBIfam" id="NF002114">
    <property type="entry name" value="PRK00951.2-4"/>
    <property type="match status" value="1"/>
</dbReference>
<dbReference type="PANTHER" id="PTHR23133:SF2">
    <property type="entry name" value="IMIDAZOLEGLYCEROL-PHOSPHATE DEHYDRATASE"/>
    <property type="match status" value="1"/>
</dbReference>
<dbReference type="PANTHER" id="PTHR23133">
    <property type="entry name" value="IMIDAZOLEGLYCEROL-PHOSPHATE DEHYDRATASE HIS7"/>
    <property type="match status" value="1"/>
</dbReference>
<dbReference type="Pfam" id="PF00475">
    <property type="entry name" value="IGPD"/>
    <property type="match status" value="1"/>
</dbReference>
<dbReference type="SUPFAM" id="SSF54211">
    <property type="entry name" value="Ribosomal protein S5 domain 2-like"/>
    <property type="match status" value="2"/>
</dbReference>
<dbReference type="PROSITE" id="PS00954">
    <property type="entry name" value="IGP_DEHYDRATASE_1"/>
    <property type="match status" value="1"/>
</dbReference>
<dbReference type="PROSITE" id="PS00955">
    <property type="entry name" value="IGP_DEHYDRATASE_2"/>
    <property type="match status" value="1"/>
</dbReference>
<accession>Q8G4S7</accession>
<sequence>MARTAHIVRETSESHIDLELNLDGTGKTDIDTSVPFYNHMMTALGKHSLIDLTIHAHGDTDIDVHHTVEDTAIVFGEALKQALGDKKGIRRFADATVPLDEALAKAVVDISGRPYCVCSGEPEGYEFCMIGGHFTGSLVRHVMESIAFHAGICLHMQVLAGRDPHHIAEAEFKALARALRFAVEIDPRVDGVPSTKGAL</sequence>
<name>HIS7_BIFLO</name>
<comment type="catalytic activity">
    <reaction evidence="1">
        <text>D-erythro-1-(imidazol-4-yl)glycerol 3-phosphate = 3-(imidazol-4-yl)-2-oxopropyl phosphate + H2O</text>
        <dbReference type="Rhea" id="RHEA:11040"/>
        <dbReference type="ChEBI" id="CHEBI:15377"/>
        <dbReference type="ChEBI" id="CHEBI:57766"/>
        <dbReference type="ChEBI" id="CHEBI:58278"/>
        <dbReference type="EC" id="4.2.1.19"/>
    </reaction>
</comment>
<comment type="pathway">
    <text evidence="1">Amino-acid biosynthesis; L-histidine biosynthesis; L-histidine from 5-phospho-alpha-D-ribose 1-diphosphate: step 6/9.</text>
</comment>
<comment type="subcellular location">
    <subcellularLocation>
        <location evidence="1">Cytoplasm</location>
    </subcellularLocation>
</comment>
<comment type="similarity">
    <text evidence="1">Belongs to the imidazoleglycerol-phosphate dehydratase family.</text>
</comment>
<evidence type="ECO:0000255" key="1">
    <source>
        <dbReference type="HAMAP-Rule" id="MF_00076"/>
    </source>
</evidence>
<feature type="chain" id="PRO_0000158111" description="Imidazoleglycerol-phosphate dehydratase">
    <location>
        <begin position="1"/>
        <end position="199"/>
    </location>
</feature>
<proteinExistence type="inferred from homology"/>
<keyword id="KW-0028">Amino-acid biosynthesis</keyword>
<keyword id="KW-0963">Cytoplasm</keyword>
<keyword id="KW-0368">Histidine biosynthesis</keyword>
<keyword id="KW-0456">Lyase</keyword>
<keyword id="KW-1185">Reference proteome</keyword>
<reference key="1">
    <citation type="journal article" date="2002" name="Proc. Natl. Acad. Sci. U.S.A.">
        <title>The genome sequence of Bifidobacterium longum reflects its adaptation to the human gastrointestinal tract.</title>
        <authorList>
            <person name="Schell M.A."/>
            <person name="Karmirantzou M."/>
            <person name="Snel B."/>
            <person name="Vilanova D."/>
            <person name="Berger B."/>
            <person name="Pessi G."/>
            <person name="Zwahlen M.-C."/>
            <person name="Desiere F."/>
            <person name="Bork P."/>
            <person name="Delley M."/>
            <person name="Pridmore R.D."/>
            <person name="Arigoni F."/>
        </authorList>
    </citation>
    <scope>NUCLEOTIDE SEQUENCE [LARGE SCALE GENOMIC DNA]</scope>
    <source>
        <strain>NCC 2705</strain>
    </source>
</reference>
<protein>
    <recommendedName>
        <fullName evidence="1">Imidazoleglycerol-phosphate dehydratase</fullName>
        <shortName evidence="1">IGPD</shortName>
        <ecNumber evidence="1">4.2.1.19</ecNumber>
    </recommendedName>
</protein>